<evidence type="ECO:0000250" key="1">
    <source>
        <dbReference type="UniProtKB" id="P00392"/>
    </source>
</evidence>
<evidence type="ECO:0000255" key="2">
    <source>
        <dbReference type="PROSITE-ProRule" id="PRU00280"/>
    </source>
</evidence>
<evidence type="ECO:0000269" key="3">
    <source>
    </source>
</evidence>
<evidence type="ECO:0000305" key="4"/>
<keyword id="KW-1015">Disulfide bond</keyword>
<keyword id="KW-0274">FAD</keyword>
<keyword id="KW-0285">Flavoprotein</keyword>
<keyword id="KW-0475">Mercuric resistance</keyword>
<keyword id="KW-0476">Mercury</keyword>
<keyword id="KW-0479">Metal-binding</keyword>
<keyword id="KW-0521">NADP</keyword>
<keyword id="KW-0560">Oxidoreductase</keyword>
<keyword id="KW-0676">Redox-active center</keyword>
<keyword id="KW-0677">Repeat</keyword>
<keyword id="KW-0814">Transposable element</keyword>
<sequence length="631" mass="68072">MKKYRVNVQGMTCSGCEQHVAVALENMGAKAIEVDFRRGEAVFELPDDVKVEDAKNAIADANYHPGEAEEFQSEQKTNLLKKYRLNVEGMTCTGCEEHIAVALENAGAKGIEVDFRRGEALFELPYDVDIDIAKTAITDAQYQPGEAEEIQVQSEKRTDVSLNDEGNYDYDYIIIGSGGAAFSSAIEAVALNAKVAMIERGTVGGTCVNVGCVPSKTLLRAGEINHLAKNNPFVGLHTSASNVDLAPLVKQKNDLVTEMRNEKYVNLIDDYGFELIKGESKFVNENTVEVNGNQITAKRFLIATGASSTAPNIPGLDEVDYLTSTSLLELKKVPNRLTVIGSGYIGMELGQLFHNLGSEVTLIQRSERLLKEYDPEISEAITKALTEQGINLVTGATYERVEQDGDIKKVHVEINGKKRIIEAEQLLIATGRKPIQTSLNLHAAGVEVGSRGEIVIDDYLKTTNSRIYSAGDVTPGPQFVYVAAYEGGLAARNAIGGLNQKVNLEVVPGVTFTSPSIATVGLTEQQAKEKGYEVKTSVLPLDAVPRALVNRETTGVFKLVADAKTLKVLGAHVVAENAGDVIYAATLAVKFGLTVGDLRETMAPYLTMAEGLKLAVLTFDKDVSKLSCCAG</sequence>
<proteinExistence type="evidence at protein level"/>
<reference key="1">
    <citation type="journal article" date="1989" name="J. Bacteriol.">
        <title>Nucleotide sequence of a chromosomal mercury resistance determinant from a Bacillus sp. with broad-spectrum mercury resistance.</title>
        <authorList>
            <person name="Wang Y."/>
            <person name="Moore M."/>
            <person name="Levinson H.S."/>
            <person name="Silver S."/>
            <person name="Walsh C.T."/>
            <person name="Mahler I."/>
        </authorList>
    </citation>
    <scope>NUCLEOTIDE SEQUENCE [GENOMIC DNA]</scope>
    <source>
        <strain>RC607</strain>
        <transposon>Tn5084</transposon>
    </source>
</reference>
<reference key="2">
    <citation type="journal article" date="1999" name="J. Bacteriol.">
        <title>Mercury resistance in Bacillus cereus RC607: transcriptional organization and two new open reading frames.</title>
        <authorList>
            <person name="Gupta A."/>
            <person name="Phung L.T."/>
            <person name="Chakravarty L."/>
            <person name="Silver S."/>
        </authorList>
    </citation>
    <scope>NUCLEOTIDE SEQUENCE [GENOMIC DNA]</scope>
    <source>
        <strain>RC607</strain>
        <transposon>Tn5084</transposon>
    </source>
</reference>
<reference key="3">
    <citation type="journal article" date="1994" name="FEBS Lett.">
        <title>In vivo and in vitro effects of mutagenesis of active site tyrosine residues of mercuric reductase.</title>
        <authorList>
            <person name="Rennex D."/>
            <person name="Pickett M."/>
            <person name="Bradley M."/>
        </authorList>
    </citation>
    <scope>MUTAGENESIS OF TYR-264 AND TYR-605</scope>
</reference>
<reference key="4">
    <citation type="journal article" date="1991" name="Nature">
        <title>Structure of the detoxification catalyst mercuric ion reductase from Bacillus sp. strain RC607.</title>
        <authorList>
            <person name="Schiering N."/>
            <person name="Kabsch W."/>
            <person name="Moore M.J."/>
            <person name="Distefano M.D."/>
            <person name="Walsh C.T."/>
            <person name="Pai E.F."/>
        </authorList>
    </citation>
    <scope>X-RAY CRYSTALLOGRAPHY (3.0 ANGSTROMS)</scope>
    <source>
        <strain>RC607</strain>
    </source>
</reference>
<feature type="chain" id="PRO_0000067995" description="Mercuric reductase">
    <location>
        <begin position="1"/>
        <end position="631"/>
    </location>
</feature>
<feature type="domain" description="HMA 1" evidence="2">
    <location>
        <begin position="2"/>
        <end position="66"/>
    </location>
</feature>
<feature type="domain" description="HMA 2" evidence="2">
    <location>
        <begin position="81"/>
        <end position="145"/>
    </location>
</feature>
<feature type="binding site" evidence="2">
    <location>
        <position position="13"/>
    </location>
    <ligand>
        <name>a metal cation</name>
        <dbReference type="ChEBI" id="CHEBI:25213"/>
        <label>1</label>
    </ligand>
</feature>
<feature type="binding site" evidence="2">
    <location>
        <position position="16"/>
    </location>
    <ligand>
        <name>a metal cation</name>
        <dbReference type="ChEBI" id="CHEBI:25213"/>
        <label>1</label>
    </ligand>
</feature>
<feature type="binding site" evidence="2">
    <location>
        <position position="92"/>
    </location>
    <ligand>
        <name>a metal cation</name>
        <dbReference type="ChEBI" id="CHEBI:25213"/>
        <label>2</label>
    </ligand>
</feature>
<feature type="binding site" evidence="2">
    <location>
        <position position="95"/>
    </location>
    <ligand>
        <name>a metal cation</name>
        <dbReference type="ChEBI" id="CHEBI:25213"/>
        <label>2</label>
    </ligand>
</feature>
<feature type="binding site" evidence="1">
    <location>
        <position position="181"/>
    </location>
    <ligand>
        <name>FAD</name>
        <dbReference type="ChEBI" id="CHEBI:57692"/>
    </ligand>
</feature>
<feature type="binding site" evidence="1">
    <location>
        <position position="201"/>
    </location>
    <ligand>
        <name>FAD</name>
        <dbReference type="ChEBI" id="CHEBI:57692"/>
    </ligand>
</feature>
<feature type="binding site" evidence="1">
    <location>
        <position position="206"/>
    </location>
    <ligand>
        <name>FAD</name>
        <dbReference type="ChEBI" id="CHEBI:57692"/>
    </ligand>
</feature>
<feature type="binding site" evidence="1">
    <location>
        <position position="216"/>
    </location>
    <ligand>
        <name>FAD</name>
        <dbReference type="ChEBI" id="CHEBI:57692"/>
    </ligand>
</feature>
<feature type="binding site" evidence="1">
    <location>
        <position position="472"/>
    </location>
    <ligand>
        <name>FAD</name>
        <dbReference type="ChEBI" id="CHEBI:57692"/>
    </ligand>
</feature>
<feature type="binding site" evidence="1">
    <location>
        <position position="480"/>
    </location>
    <ligand>
        <name>FAD</name>
        <dbReference type="ChEBI" id="CHEBI:57692"/>
    </ligand>
</feature>
<feature type="binding site" evidence="1">
    <location>
        <position position="628"/>
    </location>
    <ligand>
        <name>Hg(2+)</name>
        <dbReference type="ChEBI" id="CHEBI:16793"/>
    </ligand>
</feature>
<feature type="binding site" evidence="1">
    <location>
        <position position="629"/>
    </location>
    <ligand>
        <name>Hg(2+)</name>
        <dbReference type="ChEBI" id="CHEBI:16793"/>
    </ligand>
</feature>
<feature type="disulfide bond" description="Redox-active" evidence="1">
    <location>
        <begin position="207"/>
        <end position="212"/>
    </location>
</feature>
<feature type="mutagenesis site" description="30-fold decrease in activity. 300-fold decrease in activity; when associated with F-605." evidence="3">
    <original>Y</original>
    <variation>F</variation>
    <location>
        <position position="264"/>
    </location>
</feature>
<feature type="mutagenesis site" description="10-fold decrease in activity. 300-fold decrease in activity; when associated with F-264." evidence="3">
    <original>Y</original>
    <variation>F</variation>
    <location>
        <position position="605"/>
    </location>
</feature>
<feature type="mutagenesis site" description="2-fold decrease in activity." evidence="3">
    <original>Y</original>
    <variation>H</variation>
    <location>
        <position position="605"/>
    </location>
</feature>
<gene>
    <name type="primary">merA</name>
</gene>
<organism>
    <name type="scientific">Bacillus cereus</name>
    <dbReference type="NCBI Taxonomy" id="1396"/>
    <lineage>
        <taxon>Bacteria</taxon>
        <taxon>Bacillati</taxon>
        <taxon>Bacillota</taxon>
        <taxon>Bacilli</taxon>
        <taxon>Bacillales</taxon>
        <taxon>Bacillaceae</taxon>
        <taxon>Bacillus</taxon>
        <taxon>Bacillus cereus group</taxon>
    </lineage>
</organism>
<accession>P16171</accession>
<comment type="function">
    <text evidence="1">Resistance to Hg(2+) in bacteria appears to be governed by a specialized system which includes mercuric reductase. MerA protein is responsible for volatilizing mercury as Hg(0).</text>
</comment>
<comment type="catalytic activity">
    <reaction evidence="1">
        <text>Hg + NADP(+) + H(+) = Hg(2+) + NADPH</text>
        <dbReference type="Rhea" id="RHEA:23856"/>
        <dbReference type="ChEBI" id="CHEBI:15378"/>
        <dbReference type="ChEBI" id="CHEBI:16170"/>
        <dbReference type="ChEBI" id="CHEBI:16793"/>
        <dbReference type="ChEBI" id="CHEBI:57783"/>
        <dbReference type="ChEBI" id="CHEBI:58349"/>
        <dbReference type="EC" id="1.16.1.1"/>
    </reaction>
</comment>
<comment type="cofactor">
    <cofactor evidence="1">
        <name>FAD</name>
        <dbReference type="ChEBI" id="CHEBI:57692"/>
    </cofactor>
    <text evidence="1">Binds 1 FAD per subunit.</text>
</comment>
<comment type="subunit">
    <text evidence="1">Homodimer.</text>
</comment>
<comment type="miscellaneous">
    <text evidence="1">The active site is a redox-active disulfide bond.</text>
</comment>
<comment type="similarity">
    <text evidence="4">Belongs to the class-I pyridine nucleotide-disulfide oxidoreductase family.</text>
</comment>
<protein>
    <recommendedName>
        <fullName>Mercuric reductase</fullName>
        <ecNumber evidence="1">1.16.1.1</ecNumber>
    </recommendedName>
    <alternativeName>
        <fullName>Hg(II) reductase</fullName>
    </alternativeName>
</protein>
<dbReference type="EC" id="1.16.1.1" evidence="1"/>
<dbReference type="EMBL" id="AF138877">
    <property type="protein sequence ID" value="AAA83977.1"/>
    <property type="molecule type" value="Genomic_DNA"/>
</dbReference>
<dbReference type="EMBL" id="AB066362">
    <property type="protein sequence ID" value="BAB62433.1"/>
    <property type="molecule type" value="Genomic_DNA"/>
</dbReference>
<dbReference type="PIR" id="E32227">
    <property type="entry name" value="E32227"/>
</dbReference>
<dbReference type="SMR" id="P16171"/>
<dbReference type="GO" id="GO:0050660">
    <property type="term" value="F:flavin adenine dinucleotide binding"/>
    <property type="evidence" value="ECO:0007669"/>
    <property type="project" value="InterPro"/>
</dbReference>
<dbReference type="GO" id="GO:0016152">
    <property type="term" value="F:mercury (II) reductase (NADP+) activity"/>
    <property type="evidence" value="ECO:0007669"/>
    <property type="project" value="UniProtKB-EC"/>
</dbReference>
<dbReference type="GO" id="GO:0045340">
    <property type="term" value="F:mercury ion binding"/>
    <property type="evidence" value="ECO:0007669"/>
    <property type="project" value="InterPro"/>
</dbReference>
<dbReference type="GO" id="GO:0003955">
    <property type="term" value="F:NAD(P)H dehydrogenase (quinone) activity"/>
    <property type="evidence" value="ECO:0007669"/>
    <property type="project" value="TreeGrafter"/>
</dbReference>
<dbReference type="GO" id="GO:0050661">
    <property type="term" value="F:NADP binding"/>
    <property type="evidence" value="ECO:0007669"/>
    <property type="project" value="InterPro"/>
</dbReference>
<dbReference type="GO" id="GO:0016668">
    <property type="term" value="F:oxidoreductase activity, acting on a sulfur group of donors, NAD(P) as acceptor"/>
    <property type="evidence" value="ECO:0007669"/>
    <property type="project" value="InterPro"/>
</dbReference>
<dbReference type="GO" id="GO:0050787">
    <property type="term" value="P:detoxification of mercury ion"/>
    <property type="evidence" value="ECO:0007669"/>
    <property type="project" value="InterPro"/>
</dbReference>
<dbReference type="CDD" id="cd00371">
    <property type="entry name" value="HMA"/>
    <property type="match status" value="2"/>
</dbReference>
<dbReference type="FunFam" id="3.30.390.30:FF:000001">
    <property type="entry name" value="Dihydrolipoyl dehydrogenase"/>
    <property type="match status" value="1"/>
</dbReference>
<dbReference type="Gene3D" id="3.30.390.30">
    <property type="match status" value="1"/>
</dbReference>
<dbReference type="Gene3D" id="3.30.70.100">
    <property type="match status" value="2"/>
</dbReference>
<dbReference type="Gene3D" id="3.50.50.60">
    <property type="entry name" value="FAD/NAD(P)-binding domain"/>
    <property type="match status" value="2"/>
</dbReference>
<dbReference type="InterPro" id="IPR036188">
    <property type="entry name" value="FAD/NAD-bd_sf"/>
</dbReference>
<dbReference type="InterPro" id="IPR023753">
    <property type="entry name" value="FAD/NAD-binding_dom"/>
</dbReference>
<dbReference type="InterPro" id="IPR016156">
    <property type="entry name" value="FAD/NAD-linked_Rdtase_dimer_sf"/>
</dbReference>
<dbReference type="InterPro" id="IPR017969">
    <property type="entry name" value="Heavy-metal-associated_CS"/>
</dbReference>
<dbReference type="InterPro" id="IPR006121">
    <property type="entry name" value="HMA_dom"/>
</dbReference>
<dbReference type="InterPro" id="IPR036163">
    <property type="entry name" value="HMA_dom_sf"/>
</dbReference>
<dbReference type="InterPro" id="IPR021179">
    <property type="entry name" value="Mercury_reductase_MerA"/>
</dbReference>
<dbReference type="InterPro" id="IPR001100">
    <property type="entry name" value="Pyr_nuc-diS_OxRdtase"/>
</dbReference>
<dbReference type="InterPro" id="IPR004099">
    <property type="entry name" value="Pyr_nucl-diS_OxRdtase_dimer"/>
</dbReference>
<dbReference type="InterPro" id="IPR012999">
    <property type="entry name" value="Pyr_OxRdtase_I_AS"/>
</dbReference>
<dbReference type="NCBIfam" id="TIGR02053">
    <property type="entry name" value="MerA"/>
    <property type="match status" value="1"/>
</dbReference>
<dbReference type="PANTHER" id="PTHR43014">
    <property type="entry name" value="MERCURIC REDUCTASE"/>
    <property type="match status" value="1"/>
</dbReference>
<dbReference type="PANTHER" id="PTHR43014:SF4">
    <property type="entry name" value="PYRIDINE NUCLEOTIDE-DISULFIDE OXIDOREDUCTASE RCLA-RELATED"/>
    <property type="match status" value="1"/>
</dbReference>
<dbReference type="Pfam" id="PF00403">
    <property type="entry name" value="HMA"/>
    <property type="match status" value="1"/>
</dbReference>
<dbReference type="Pfam" id="PF07992">
    <property type="entry name" value="Pyr_redox_2"/>
    <property type="match status" value="1"/>
</dbReference>
<dbReference type="Pfam" id="PF02852">
    <property type="entry name" value="Pyr_redox_dim"/>
    <property type="match status" value="1"/>
</dbReference>
<dbReference type="PIRSF" id="PIRSF000350">
    <property type="entry name" value="Mercury_reductase_MerA"/>
    <property type="match status" value="1"/>
</dbReference>
<dbReference type="PRINTS" id="PR00945">
    <property type="entry name" value="HGRDTASE"/>
</dbReference>
<dbReference type="SUPFAM" id="SSF51905">
    <property type="entry name" value="FAD/NAD(P)-binding domain"/>
    <property type="match status" value="1"/>
</dbReference>
<dbReference type="SUPFAM" id="SSF55424">
    <property type="entry name" value="FAD/NAD-linked reductases, dimerisation (C-terminal) domain"/>
    <property type="match status" value="1"/>
</dbReference>
<dbReference type="SUPFAM" id="SSF55008">
    <property type="entry name" value="HMA, heavy metal-associated domain"/>
    <property type="match status" value="2"/>
</dbReference>
<dbReference type="PROSITE" id="PS01047">
    <property type="entry name" value="HMA_1"/>
    <property type="match status" value="2"/>
</dbReference>
<dbReference type="PROSITE" id="PS50846">
    <property type="entry name" value="HMA_2"/>
    <property type="match status" value="2"/>
</dbReference>
<dbReference type="PROSITE" id="PS00076">
    <property type="entry name" value="PYRIDINE_REDOX_1"/>
    <property type="match status" value="1"/>
</dbReference>
<name>MERA_BACCE</name>